<evidence type="ECO:0000255" key="1"/>
<evidence type="ECO:0000305" key="2"/>
<gene>
    <name type="primary">GAST1</name>
</gene>
<comment type="subcellular location">
    <subcellularLocation>
        <location>Secreted</location>
    </subcellularLocation>
</comment>
<comment type="tissue specificity">
    <text>All shoot organs.</text>
</comment>
<comment type="induction">
    <text>By gibberellins. Inhibited by abscisic acid (ABA).</text>
</comment>
<comment type="PTM">
    <text>Six disulfide bonds may be present.</text>
</comment>
<comment type="similarity">
    <text evidence="2">Belongs to the GASA family.</text>
</comment>
<protein>
    <recommendedName>
        <fullName>Protein GAST1</fullName>
    </recommendedName>
</protein>
<keyword id="KW-1015">Disulfide bond</keyword>
<keyword id="KW-1185">Reference proteome</keyword>
<keyword id="KW-0964">Secreted</keyword>
<keyword id="KW-0732">Signal</keyword>
<accession>P27057</accession>
<name>GAST1_SOLLC</name>
<sequence>MAGKMSIVLFVLLVVFLTQNQVSRANIMRDEQQQQQRNNQLYGVSEGRLHPQDCQPKCTYRCSKTSYKKPCMFFCQKCCAKCLCVPAGTYGNKQSCPCYNNWKTKRGGPKCP</sequence>
<feature type="signal peptide" evidence="1">
    <location>
        <begin position="1"/>
        <end position="25"/>
    </location>
</feature>
<feature type="chain" id="PRO_0000021326" description="Protein GAST1">
    <location>
        <begin position="26"/>
        <end position="112"/>
    </location>
</feature>
<proteinExistence type="evidence at transcript level"/>
<organism>
    <name type="scientific">Solanum lycopersicum</name>
    <name type="common">Tomato</name>
    <name type="synonym">Lycopersicon esculentum</name>
    <dbReference type="NCBI Taxonomy" id="4081"/>
    <lineage>
        <taxon>Eukaryota</taxon>
        <taxon>Viridiplantae</taxon>
        <taxon>Streptophyta</taxon>
        <taxon>Embryophyta</taxon>
        <taxon>Tracheophyta</taxon>
        <taxon>Spermatophyta</taxon>
        <taxon>Magnoliopsida</taxon>
        <taxon>eudicotyledons</taxon>
        <taxon>Gunneridae</taxon>
        <taxon>Pentapetalae</taxon>
        <taxon>asterids</taxon>
        <taxon>lamiids</taxon>
        <taxon>Solanales</taxon>
        <taxon>Solanaceae</taxon>
        <taxon>Solanoideae</taxon>
        <taxon>Solaneae</taxon>
        <taxon>Solanum</taxon>
        <taxon>Solanum subgen. Lycopersicon</taxon>
    </lineage>
</organism>
<reference key="1">
    <citation type="journal article" date="1992" name="Plant J.">
        <title>Characterization of a shoot-specific, GA3- and ABA-regulated gene from tomato.</title>
        <authorList>
            <person name="Shi L."/>
            <person name="Gast R.T."/>
            <person name="Gopalraj M."/>
            <person name="Olszewski N.E."/>
        </authorList>
    </citation>
    <scope>NUCLEOTIDE SEQUENCE [GENOMIC DNA]</scope>
    <source>
        <strain>cv. Moneymaker</strain>
        <tissue>Shoot</tissue>
    </source>
</reference>
<dbReference type="EMBL" id="X63093">
    <property type="protein sequence ID" value="CAA44807.1"/>
    <property type="molecule type" value="Genomic_DNA"/>
</dbReference>
<dbReference type="PIR" id="S22151">
    <property type="entry name" value="S22151"/>
</dbReference>
<dbReference type="RefSeq" id="NP_001296306.1">
    <property type="nucleotide sequence ID" value="NM_001309377.1"/>
</dbReference>
<dbReference type="SMR" id="P27057"/>
<dbReference type="STRING" id="4081.P27057"/>
<dbReference type="PaxDb" id="4081-Solyc02g089350.2.1"/>
<dbReference type="EnsemblPlants" id="Solyc02g089350.3.1">
    <property type="protein sequence ID" value="Solyc02g089350.3.1"/>
    <property type="gene ID" value="Solyc02g089350.3"/>
</dbReference>
<dbReference type="GeneID" id="101248254"/>
<dbReference type="Gramene" id="Solyc02g089350.3.1">
    <property type="protein sequence ID" value="Solyc02g089350.3.1"/>
    <property type="gene ID" value="Solyc02g089350.3"/>
</dbReference>
<dbReference type="KEGG" id="sly:101248254"/>
<dbReference type="eggNOG" id="ENOG502S20B">
    <property type="taxonomic scope" value="Eukaryota"/>
</dbReference>
<dbReference type="HOGENOM" id="CLU_142643_1_0_1"/>
<dbReference type="InParanoid" id="P27057"/>
<dbReference type="OMA" id="HPQDCQP"/>
<dbReference type="OrthoDB" id="1886938at2759"/>
<dbReference type="PhylomeDB" id="P27057"/>
<dbReference type="Proteomes" id="UP000004994">
    <property type="component" value="Chromosome 2"/>
</dbReference>
<dbReference type="GO" id="GO:0005576">
    <property type="term" value="C:extracellular region"/>
    <property type="evidence" value="ECO:0007669"/>
    <property type="project" value="UniProtKB-SubCell"/>
</dbReference>
<dbReference type="InterPro" id="IPR003854">
    <property type="entry name" value="GASA"/>
</dbReference>
<dbReference type="PANTHER" id="PTHR23201">
    <property type="entry name" value="EXTENSIN, PROLINE-RICH PROTEIN"/>
    <property type="match status" value="1"/>
</dbReference>
<dbReference type="PANTHER" id="PTHR23201:SF77">
    <property type="entry name" value="PROTEIN GAST1"/>
    <property type="match status" value="1"/>
</dbReference>
<dbReference type="Pfam" id="PF02704">
    <property type="entry name" value="GASA"/>
    <property type="match status" value="1"/>
</dbReference>